<gene>
    <name evidence="1" type="primary">rnhB</name>
    <name type="ordered locus">FTL_1182</name>
</gene>
<reference key="1">
    <citation type="submission" date="2006-03" db="EMBL/GenBank/DDBJ databases">
        <title>Complete genome sequence of Francisella tularensis LVS (Live Vaccine Strain).</title>
        <authorList>
            <person name="Chain P."/>
            <person name="Larimer F."/>
            <person name="Land M."/>
            <person name="Stilwagen S."/>
            <person name="Larsson P."/>
            <person name="Bearden S."/>
            <person name="Chu M."/>
            <person name="Oyston P."/>
            <person name="Forsman M."/>
            <person name="Andersson S."/>
            <person name="Lindler L."/>
            <person name="Titball R."/>
            <person name="Garcia E."/>
        </authorList>
    </citation>
    <scope>NUCLEOTIDE SEQUENCE [LARGE SCALE GENOMIC DNA]</scope>
    <source>
        <strain>LVS</strain>
    </source>
</reference>
<dbReference type="EC" id="3.1.26.4" evidence="1"/>
<dbReference type="EMBL" id="AM233362">
    <property type="protein sequence ID" value="CAJ79621.1"/>
    <property type="molecule type" value="Genomic_DNA"/>
</dbReference>
<dbReference type="RefSeq" id="WP_003016244.1">
    <property type="nucleotide sequence ID" value="NZ_CP009694.1"/>
</dbReference>
<dbReference type="SMR" id="Q2A337"/>
<dbReference type="KEGG" id="ftl:FTL_1182"/>
<dbReference type="Proteomes" id="UP000001944">
    <property type="component" value="Chromosome"/>
</dbReference>
<dbReference type="GO" id="GO:0005737">
    <property type="term" value="C:cytoplasm"/>
    <property type="evidence" value="ECO:0007669"/>
    <property type="project" value="UniProtKB-SubCell"/>
</dbReference>
<dbReference type="GO" id="GO:0032299">
    <property type="term" value="C:ribonuclease H2 complex"/>
    <property type="evidence" value="ECO:0007669"/>
    <property type="project" value="TreeGrafter"/>
</dbReference>
<dbReference type="GO" id="GO:0030145">
    <property type="term" value="F:manganese ion binding"/>
    <property type="evidence" value="ECO:0007669"/>
    <property type="project" value="UniProtKB-UniRule"/>
</dbReference>
<dbReference type="GO" id="GO:0003723">
    <property type="term" value="F:RNA binding"/>
    <property type="evidence" value="ECO:0007669"/>
    <property type="project" value="InterPro"/>
</dbReference>
<dbReference type="GO" id="GO:0004523">
    <property type="term" value="F:RNA-DNA hybrid ribonuclease activity"/>
    <property type="evidence" value="ECO:0007669"/>
    <property type="project" value="UniProtKB-UniRule"/>
</dbReference>
<dbReference type="GO" id="GO:0043137">
    <property type="term" value="P:DNA replication, removal of RNA primer"/>
    <property type="evidence" value="ECO:0007669"/>
    <property type="project" value="TreeGrafter"/>
</dbReference>
<dbReference type="GO" id="GO:0006298">
    <property type="term" value="P:mismatch repair"/>
    <property type="evidence" value="ECO:0007669"/>
    <property type="project" value="TreeGrafter"/>
</dbReference>
<dbReference type="CDD" id="cd07182">
    <property type="entry name" value="RNase_HII_bacteria_HII_like"/>
    <property type="match status" value="1"/>
</dbReference>
<dbReference type="FunFam" id="3.30.420.10:FF:000006">
    <property type="entry name" value="Ribonuclease HII"/>
    <property type="match status" value="1"/>
</dbReference>
<dbReference type="Gene3D" id="3.30.420.10">
    <property type="entry name" value="Ribonuclease H-like superfamily/Ribonuclease H"/>
    <property type="match status" value="1"/>
</dbReference>
<dbReference type="HAMAP" id="MF_00052_B">
    <property type="entry name" value="RNase_HII_B"/>
    <property type="match status" value="1"/>
</dbReference>
<dbReference type="InterPro" id="IPR022898">
    <property type="entry name" value="RNase_HII"/>
</dbReference>
<dbReference type="InterPro" id="IPR001352">
    <property type="entry name" value="RNase_HII/HIII"/>
</dbReference>
<dbReference type="InterPro" id="IPR024567">
    <property type="entry name" value="RNase_HII/HIII_dom"/>
</dbReference>
<dbReference type="InterPro" id="IPR012337">
    <property type="entry name" value="RNaseH-like_sf"/>
</dbReference>
<dbReference type="InterPro" id="IPR036397">
    <property type="entry name" value="RNaseH_sf"/>
</dbReference>
<dbReference type="NCBIfam" id="NF000595">
    <property type="entry name" value="PRK00015.1-3"/>
    <property type="match status" value="1"/>
</dbReference>
<dbReference type="NCBIfam" id="NF000596">
    <property type="entry name" value="PRK00015.1-4"/>
    <property type="match status" value="1"/>
</dbReference>
<dbReference type="PANTHER" id="PTHR10954">
    <property type="entry name" value="RIBONUCLEASE H2 SUBUNIT A"/>
    <property type="match status" value="1"/>
</dbReference>
<dbReference type="PANTHER" id="PTHR10954:SF18">
    <property type="entry name" value="RIBONUCLEASE HII"/>
    <property type="match status" value="1"/>
</dbReference>
<dbReference type="Pfam" id="PF01351">
    <property type="entry name" value="RNase_HII"/>
    <property type="match status" value="1"/>
</dbReference>
<dbReference type="SUPFAM" id="SSF53098">
    <property type="entry name" value="Ribonuclease H-like"/>
    <property type="match status" value="1"/>
</dbReference>
<dbReference type="PROSITE" id="PS51975">
    <property type="entry name" value="RNASE_H_2"/>
    <property type="match status" value="1"/>
</dbReference>
<name>RNH2_FRATH</name>
<protein>
    <recommendedName>
        <fullName evidence="1">Ribonuclease HII</fullName>
        <shortName evidence="1">RNase HII</shortName>
        <ecNumber evidence="1">3.1.26.4</ecNumber>
    </recommendedName>
</protein>
<sequence>MIILGIDEAGRGPLSGPVVAAGVILDQDKIIDGLADSKKLTEKKRQSLYQQIITHAKAYTIVEISPQQIDELNILQATLKAIHQVANNLERQFDKVLVDGNKLPNWDYNSEAIVKGDSKIIEISAASILAKVHRDNICLEHDRLYPQYGFAKHKGYPTKEHLENIKKYGVLDIHRKSYKPVQVLLNE</sequence>
<feature type="chain" id="PRO_1000031143" description="Ribonuclease HII">
    <location>
        <begin position="1"/>
        <end position="187"/>
    </location>
</feature>
<feature type="domain" description="RNase H type-2" evidence="2">
    <location>
        <begin position="1"/>
        <end position="187"/>
    </location>
</feature>
<feature type="binding site" evidence="1">
    <location>
        <position position="7"/>
    </location>
    <ligand>
        <name>a divalent metal cation</name>
        <dbReference type="ChEBI" id="CHEBI:60240"/>
    </ligand>
</feature>
<feature type="binding site" evidence="1">
    <location>
        <position position="8"/>
    </location>
    <ligand>
        <name>a divalent metal cation</name>
        <dbReference type="ChEBI" id="CHEBI:60240"/>
    </ligand>
</feature>
<feature type="binding site" evidence="1">
    <location>
        <position position="99"/>
    </location>
    <ligand>
        <name>a divalent metal cation</name>
        <dbReference type="ChEBI" id="CHEBI:60240"/>
    </ligand>
</feature>
<organism>
    <name type="scientific">Francisella tularensis subsp. holarctica (strain LVS)</name>
    <dbReference type="NCBI Taxonomy" id="376619"/>
    <lineage>
        <taxon>Bacteria</taxon>
        <taxon>Pseudomonadati</taxon>
        <taxon>Pseudomonadota</taxon>
        <taxon>Gammaproteobacteria</taxon>
        <taxon>Thiotrichales</taxon>
        <taxon>Francisellaceae</taxon>
        <taxon>Francisella</taxon>
    </lineage>
</organism>
<comment type="function">
    <text evidence="1">Endonuclease that specifically degrades the RNA of RNA-DNA hybrids.</text>
</comment>
<comment type="catalytic activity">
    <reaction evidence="1">
        <text>Endonucleolytic cleavage to 5'-phosphomonoester.</text>
        <dbReference type="EC" id="3.1.26.4"/>
    </reaction>
</comment>
<comment type="cofactor">
    <cofactor evidence="1">
        <name>Mn(2+)</name>
        <dbReference type="ChEBI" id="CHEBI:29035"/>
    </cofactor>
    <cofactor evidence="1">
        <name>Mg(2+)</name>
        <dbReference type="ChEBI" id="CHEBI:18420"/>
    </cofactor>
    <text evidence="1">Manganese or magnesium. Binds 1 divalent metal ion per monomer in the absence of substrate. May bind a second metal ion after substrate binding.</text>
</comment>
<comment type="subcellular location">
    <subcellularLocation>
        <location evidence="1">Cytoplasm</location>
    </subcellularLocation>
</comment>
<comment type="similarity">
    <text evidence="1">Belongs to the RNase HII family.</text>
</comment>
<proteinExistence type="inferred from homology"/>
<keyword id="KW-0963">Cytoplasm</keyword>
<keyword id="KW-0255">Endonuclease</keyword>
<keyword id="KW-0378">Hydrolase</keyword>
<keyword id="KW-0464">Manganese</keyword>
<keyword id="KW-0479">Metal-binding</keyword>
<keyword id="KW-0540">Nuclease</keyword>
<keyword id="KW-1185">Reference proteome</keyword>
<accession>Q2A337</accession>
<evidence type="ECO:0000255" key="1">
    <source>
        <dbReference type="HAMAP-Rule" id="MF_00052"/>
    </source>
</evidence>
<evidence type="ECO:0000255" key="2">
    <source>
        <dbReference type="PROSITE-ProRule" id="PRU01319"/>
    </source>
</evidence>